<accession>Q7T287</accession>
<proteinExistence type="evidence at transcript level"/>
<name>APTX_XENLA</name>
<comment type="function">
    <text evidence="2 3">DNA-binding protein involved in single-strand DNA break repair, double-strand DNA break repair and base excision repair. Resolves abortive DNA ligation intermediates formed either at base excision sites, or when DNA ligases attempt to repair non-ligatable breaks induced by reactive oxygen species. Catalyzes the release of adenylate groups covalently linked to 5'-phosphate termini, resulting in the production of 5'-phosphate termini that can be efficiently rejoined. Also able to hydrolyze adenosine 5'-monophosphoramidate (AMP-NH(2)) and diadenosine tetraphosphate (AppppA), but with lower catalytic activity (By similarity). Likewise, catalyzes the release of 3'-linked guanosine (DNAppG) and inosine (DNAppI) from DNA, but has higher specific activity with 5'-linked adenosine (AppDNA) (By similarity).</text>
</comment>
<comment type="catalytic activity">
    <reaction evidence="3">
        <text>a 5'-end adenosine-5'-diphospho-5'-2'-deoxyribonucleoside-DNA + H2O = a 5'-end 5'-phospho-2'-deoxyribonucleoside-DNA + AMP + 2 H(+)</text>
        <dbReference type="Rhea" id="RHEA:52128"/>
        <dbReference type="Rhea" id="RHEA-COMP:13180"/>
        <dbReference type="Rhea" id="RHEA-COMP:13181"/>
        <dbReference type="ChEBI" id="CHEBI:15377"/>
        <dbReference type="ChEBI" id="CHEBI:15378"/>
        <dbReference type="ChEBI" id="CHEBI:136412"/>
        <dbReference type="ChEBI" id="CHEBI:136413"/>
        <dbReference type="ChEBI" id="CHEBI:456215"/>
        <dbReference type="EC" id="3.6.1.71"/>
    </reaction>
</comment>
<comment type="catalytic activity">
    <reaction evidence="3">
        <text>a 5'-end adenosine-5'-diphospho-5'-ribonucleoside-2'-deoxyribonucleotide-DNA + H2O = a 5'-end 5'-phospho-ribonucleoside-2'-deoxyribonucleotide-DNA + AMP + 2 H(+)</text>
        <dbReference type="Rhea" id="RHEA:52132"/>
        <dbReference type="Rhea" id="RHEA-COMP:13182"/>
        <dbReference type="Rhea" id="RHEA-COMP:13183"/>
        <dbReference type="ChEBI" id="CHEBI:15377"/>
        <dbReference type="ChEBI" id="CHEBI:15378"/>
        <dbReference type="ChEBI" id="CHEBI:136414"/>
        <dbReference type="ChEBI" id="CHEBI:136415"/>
        <dbReference type="ChEBI" id="CHEBI:456215"/>
        <dbReference type="EC" id="3.6.1.71"/>
    </reaction>
</comment>
<comment type="catalytic activity">
    <reaction evidence="2">
        <text>a 3'-end 2'-deoxyribonucleotide-3'-diphospho-5'-guanosine-DNA + H2O = a 3'-end 2'-deoxyribonucleotide 3'-phosphate-DNA + GMP + 2 H(+)</text>
        <dbReference type="Rhea" id="RHEA:52140"/>
        <dbReference type="Rhea" id="RHEA-COMP:13186"/>
        <dbReference type="Rhea" id="RHEA-COMP:13187"/>
        <dbReference type="ChEBI" id="CHEBI:15377"/>
        <dbReference type="ChEBI" id="CHEBI:15378"/>
        <dbReference type="ChEBI" id="CHEBI:58115"/>
        <dbReference type="ChEBI" id="CHEBI:136419"/>
        <dbReference type="ChEBI" id="CHEBI:136420"/>
        <dbReference type="EC" id="3.6.1.72"/>
    </reaction>
</comment>
<comment type="subcellular location">
    <subcellularLocation>
        <location evidence="3">Nucleus</location>
        <location evidence="3">Nucleoplasm</location>
    </subcellularLocation>
    <subcellularLocation>
        <location evidence="3">Nucleus</location>
        <location evidence="3">Nucleolus</location>
    </subcellularLocation>
</comment>
<comment type="domain">
    <text evidence="3">The histidine triad, also called HIT motif, forms part of the binding loop for the alpha-phosphate of purine mononucleotide.</text>
</comment>
<comment type="domain">
    <text evidence="1">The HIT domain is required for enzymatic activity.</text>
</comment>
<comment type="domain">
    <text evidence="1">The C2H2-type zinc finger mediates DNA-binding.</text>
</comment>
<protein>
    <recommendedName>
        <fullName>Aprataxin</fullName>
        <ecNumber evidence="3">3.6.1.71</ecNumber>
        <ecNumber evidence="2">3.6.1.72</ecNumber>
    </recommendedName>
    <alternativeName>
        <fullName>Forkhead-associated domain histidine triad-like protein</fullName>
        <shortName>FHA-HIT</shortName>
    </alternativeName>
</protein>
<feature type="chain" id="PRO_0000109846" description="Aprataxin">
    <location>
        <begin position="1"/>
        <end position="347"/>
    </location>
</feature>
<feature type="domain" description="FHA-like">
    <location>
        <begin position="23"/>
        <end position="72"/>
    </location>
</feature>
<feature type="domain" description="HIT" evidence="4">
    <location>
        <begin position="173"/>
        <end position="278"/>
    </location>
</feature>
<feature type="zinc finger region" description="C2H2-type">
    <location>
        <begin position="322"/>
        <end position="344"/>
    </location>
</feature>
<feature type="region of interest" description="Disordered" evidence="5">
    <location>
        <begin position="110"/>
        <end position="164"/>
    </location>
</feature>
<feature type="region of interest" description="Interaction with DNA substrate" evidence="3">
    <location>
        <begin position="198"/>
        <end position="202"/>
    </location>
</feature>
<feature type="region of interest" description="Interaction with DNA substrate" evidence="3">
    <location>
        <begin position="260"/>
        <end position="261"/>
    </location>
</feature>
<feature type="short sequence motif" description="Histidine triad motif">
    <location>
        <begin position="263"/>
        <end position="267"/>
    </location>
</feature>
<feature type="compositionally biased region" description="Basic and acidic residues" evidence="5">
    <location>
        <begin position="110"/>
        <end position="122"/>
    </location>
</feature>
<feature type="compositionally biased region" description="Basic and acidic residues" evidence="5">
    <location>
        <begin position="131"/>
        <end position="141"/>
    </location>
</feature>
<feature type="compositionally biased region" description="Low complexity" evidence="5">
    <location>
        <begin position="142"/>
        <end position="154"/>
    </location>
</feature>
<feature type="compositionally biased region" description="Polar residues" evidence="5">
    <location>
        <begin position="155"/>
        <end position="164"/>
    </location>
</feature>
<feature type="active site" description="Tele-AMP-histidine intermediate" evidence="3">
    <location>
        <position position="265"/>
    </location>
</feature>
<feature type="site" description="Interaction with DNA substrate" evidence="3">
    <location>
        <position position="179"/>
    </location>
</feature>
<feature type="site" description="Interaction with DNA substrate" evidence="3">
    <location>
        <position position="256"/>
    </location>
</feature>
<feature type="site" description="Interaction with DNA substrate" evidence="3">
    <location>
        <position position="267"/>
    </location>
</feature>
<feature type="site" description="Interaction with DNA substrate" evidence="3">
    <location>
        <position position="282"/>
    </location>
</feature>
<evidence type="ECO:0000250" key="1"/>
<evidence type="ECO:0000250" key="2">
    <source>
        <dbReference type="UniProtKB" id="O74859"/>
    </source>
</evidence>
<evidence type="ECO:0000250" key="3">
    <source>
        <dbReference type="UniProtKB" id="Q7Z2E3"/>
    </source>
</evidence>
<evidence type="ECO:0000255" key="4">
    <source>
        <dbReference type="PROSITE-ProRule" id="PRU00464"/>
    </source>
</evidence>
<evidence type="ECO:0000256" key="5">
    <source>
        <dbReference type="SAM" id="MobiDB-lite"/>
    </source>
</evidence>
<dbReference type="EC" id="3.6.1.71" evidence="3"/>
<dbReference type="EC" id="3.6.1.72" evidence="2"/>
<dbReference type="EMBL" id="AY040781">
    <property type="protein sequence ID" value="AAK91772.1"/>
    <property type="molecule type" value="mRNA"/>
</dbReference>
<dbReference type="RefSeq" id="NP_001082689.1">
    <property type="nucleotide sequence ID" value="NM_001089220.1"/>
</dbReference>
<dbReference type="SMR" id="Q7T287"/>
<dbReference type="DNASU" id="398657"/>
<dbReference type="GeneID" id="398657"/>
<dbReference type="KEGG" id="xla:398657"/>
<dbReference type="AGR" id="Xenbase:XB-GENE-1015074"/>
<dbReference type="CTD" id="398657"/>
<dbReference type="Xenbase" id="XB-GENE-1015074">
    <property type="gene designation" value="aptx.L"/>
</dbReference>
<dbReference type="OrthoDB" id="3512845at2759"/>
<dbReference type="Proteomes" id="UP000186698">
    <property type="component" value="Chromosome 1L"/>
</dbReference>
<dbReference type="Bgee" id="398657">
    <property type="expression patterns" value="Expressed in blastula and 18 other cell types or tissues"/>
</dbReference>
<dbReference type="GO" id="GO:0005730">
    <property type="term" value="C:nucleolus"/>
    <property type="evidence" value="ECO:0007669"/>
    <property type="project" value="UniProtKB-SubCell"/>
</dbReference>
<dbReference type="GO" id="GO:0005654">
    <property type="term" value="C:nucleoplasm"/>
    <property type="evidence" value="ECO:0007669"/>
    <property type="project" value="UniProtKB-SubCell"/>
</dbReference>
<dbReference type="GO" id="GO:0005634">
    <property type="term" value="C:nucleus"/>
    <property type="evidence" value="ECO:0000318"/>
    <property type="project" value="GO_Central"/>
</dbReference>
<dbReference type="GO" id="GO:0033699">
    <property type="term" value="F:DNA 5'-adenosine monophosphate hydrolase activity"/>
    <property type="evidence" value="ECO:0000318"/>
    <property type="project" value="GO_Central"/>
</dbReference>
<dbReference type="GO" id="GO:0120108">
    <property type="term" value="F:DNA-3'-diphospho-5'-guanosine diphosphatase"/>
    <property type="evidence" value="ECO:0007669"/>
    <property type="project" value="UniProtKB-EC"/>
</dbReference>
<dbReference type="GO" id="GO:0003725">
    <property type="term" value="F:double-stranded RNA binding"/>
    <property type="evidence" value="ECO:0000318"/>
    <property type="project" value="GO_Central"/>
</dbReference>
<dbReference type="GO" id="GO:0030983">
    <property type="term" value="F:mismatched DNA binding"/>
    <property type="evidence" value="ECO:0000318"/>
    <property type="project" value="GO_Central"/>
</dbReference>
<dbReference type="GO" id="GO:1990165">
    <property type="term" value="F:single-strand break-containing DNA binding"/>
    <property type="evidence" value="ECO:0000318"/>
    <property type="project" value="GO_Central"/>
</dbReference>
<dbReference type="GO" id="GO:0003697">
    <property type="term" value="F:single-stranded DNA binding"/>
    <property type="evidence" value="ECO:0000318"/>
    <property type="project" value="GO_Central"/>
</dbReference>
<dbReference type="GO" id="GO:0008270">
    <property type="term" value="F:zinc ion binding"/>
    <property type="evidence" value="ECO:0007669"/>
    <property type="project" value="UniProtKB-KW"/>
</dbReference>
<dbReference type="GO" id="GO:0000012">
    <property type="term" value="P:single strand break repair"/>
    <property type="evidence" value="ECO:0000318"/>
    <property type="project" value="GO_Central"/>
</dbReference>
<dbReference type="CDD" id="cd01278">
    <property type="entry name" value="aprataxin_related"/>
    <property type="match status" value="1"/>
</dbReference>
<dbReference type="CDD" id="cd22735">
    <property type="entry name" value="FHA_APTX"/>
    <property type="match status" value="1"/>
</dbReference>
<dbReference type="FunFam" id="2.60.200.20:FF:000010">
    <property type="entry name" value="aprataxin isoform X1"/>
    <property type="match status" value="1"/>
</dbReference>
<dbReference type="FunFam" id="3.30.428.10:FF:000004">
    <property type="entry name" value="aprataxin isoform X2"/>
    <property type="match status" value="1"/>
</dbReference>
<dbReference type="Gene3D" id="2.60.200.20">
    <property type="match status" value="1"/>
</dbReference>
<dbReference type="Gene3D" id="3.30.428.10">
    <property type="entry name" value="HIT-like"/>
    <property type="match status" value="1"/>
</dbReference>
<dbReference type="InterPro" id="IPR041388">
    <property type="entry name" value="FHA_2"/>
</dbReference>
<dbReference type="InterPro" id="IPR047289">
    <property type="entry name" value="FHA_APTX"/>
</dbReference>
<dbReference type="InterPro" id="IPR019808">
    <property type="entry name" value="Histidine_triad_CS"/>
</dbReference>
<dbReference type="InterPro" id="IPR011146">
    <property type="entry name" value="HIT-like"/>
</dbReference>
<dbReference type="InterPro" id="IPR036265">
    <property type="entry name" value="HIT-like_sf"/>
</dbReference>
<dbReference type="InterPro" id="IPR008984">
    <property type="entry name" value="SMAD_FHA_dom_sf"/>
</dbReference>
<dbReference type="InterPro" id="IPR032566">
    <property type="entry name" value="Znf-C2HE"/>
</dbReference>
<dbReference type="PANTHER" id="PTHR12486:SF4">
    <property type="entry name" value="APRATAXIN"/>
    <property type="match status" value="1"/>
</dbReference>
<dbReference type="PANTHER" id="PTHR12486">
    <property type="entry name" value="APRATAXIN-RELATED"/>
    <property type="match status" value="1"/>
</dbReference>
<dbReference type="Pfam" id="PF11969">
    <property type="entry name" value="DcpS_C"/>
    <property type="match status" value="1"/>
</dbReference>
<dbReference type="Pfam" id="PF17913">
    <property type="entry name" value="FHA_2"/>
    <property type="match status" value="1"/>
</dbReference>
<dbReference type="Pfam" id="PF16278">
    <property type="entry name" value="zf-C2HE"/>
    <property type="match status" value="1"/>
</dbReference>
<dbReference type="SUPFAM" id="SSF54197">
    <property type="entry name" value="HIT-like"/>
    <property type="match status" value="1"/>
</dbReference>
<dbReference type="SUPFAM" id="SSF49879">
    <property type="entry name" value="SMAD/FHA domain"/>
    <property type="match status" value="1"/>
</dbReference>
<dbReference type="PROSITE" id="PS00892">
    <property type="entry name" value="HIT_1"/>
    <property type="match status" value="1"/>
</dbReference>
<dbReference type="PROSITE" id="PS51084">
    <property type="entry name" value="HIT_2"/>
    <property type="match status" value="1"/>
</dbReference>
<reference key="1">
    <citation type="submission" date="2001-06" db="EMBL/GenBank/DDBJ databases">
        <title>Identification of FHA-HIT as a novel nuclear protein involved in cell-cycle regulation.</title>
        <authorList>
            <person name="Huang C.-H."/>
        </authorList>
    </citation>
    <scope>NUCLEOTIDE SEQUENCE [MRNA]</scope>
</reference>
<keyword id="KW-0227">DNA damage</keyword>
<keyword id="KW-0234">DNA repair</keyword>
<keyword id="KW-0238">DNA-binding</keyword>
<keyword id="KW-0378">Hydrolase</keyword>
<keyword id="KW-0479">Metal-binding</keyword>
<keyword id="KW-0539">Nucleus</keyword>
<keyword id="KW-1185">Reference proteome</keyword>
<keyword id="KW-0862">Zinc</keyword>
<keyword id="KW-0863">Zinc-finger</keyword>
<gene>
    <name type="primary">aptx</name>
</gene>
<sequence>MFECWLVSKDGKHGRIRLPHAETVVIGRGPETQITDKKCSRHQVQLMADCNKGYVKVKQMGTNPTSINGVDIGNEHKVELKPGHTLYIVNNLYPYMIEFLEGSTNPRAKIENENRSSSKRTPENSLNVDTETPRKLVKKESNVSPSSSSGRISSCPTQGKSNVQEVKSQGHWSQDLKVSMQDPTMQVFKDDKIVVIKDKYPKARYHWLVLPWQSIASLKVLRAEHLELVQHMDAVGHNIAREHTNSKCAPFRFGYHAIPSMSHVHLHVISQDFDSPCLKNKKHWNSFTTDYFLESQAVIEMLKTHGKVNVKERISDVLKTPLLCHMCKKEQATMPQLKEHLKKHWPT</sequence>
<organism>
    <name type="scientific">Xenopus laevis</name>
    <name type="common">African clawed frog</name>
    <dbReference type="NCBI Taxonomy" id="8355"/>
    <lineage>
        <taxon>Eukaryota</taxon>
        <taxon>Metazoa</taxon>
        <taxon>Chordata</taxon>
        <taxon>Craniata</taxon>
        <taxon>Vertebrata</taxon>
        <taxon>Euteleostomi</taxon>
        <taxon>Amphibia</taxon>
        <taxon>Batrachia</taxon>
        <taxon>Anura</taxon>
        <taxon>Pipoidea</taxon>
        <taxon>Pipidae</taxon>
        <taxon>Xenopodinae</taxon>
        <taxon>Xenopus</taxon>
        <taxon>Xenopus</taxon>
    </lineage>
</organism>